<comment type="similarity">
    <text evidence="1">Belongs to the SfsA family.</text>
</comment>
<reference key="1">
    <citation type="submission" date="2008-12" db="EMBL/GenBank/DDBJ databases">
        <title>Complete sequence of chromosome of Methylobacterium chloromethanicum CM4.</title>
        <authorList>
            <consortium name="US DOE Joint Genome Institute"/>
            <person name="Lucas S."/>
            <person name="Copeland A."/>
            <person name="Lapidus A."/>
            <person name="Glavina del Rio T."/>
            <person name="Dalin E."/>
            <person name="Tice H."/>
            <person name="Bruce D."/>
            <person name="Goodwin L."/>
            <person name="Pitluck S."/>
            <person name="Chertkov O."/>
            <person name="Brettin T."/>
            <person name="Detter J.C."/>
            <person name="Han C."/>
            <person name="Larimer F."/>
            <person name="Land M."/>
            <person name="Hauser L."/>
            <person name="Kyrpides N."/>
            <person name="Mikhailova N."/>
            <person name="Marx C."/>
            <person name="Richardson P."/>
        </authorList>
    </citation>
    <scope>NUCLEOTIDE SEQUENCE [LARGE SCALE GENOMIC DNA]</scope>
    <source>
        <strain>CM4 / NCIMB 13688</strain>
    </source>
</reference>
<sequence length="248" mass="26685">MRFPTPLIEGRLVRRYKRFLADVRLPDGTMVTAHCANPGAMLGLNTDGFRVLLSPSTNPLRKLGYSWELVEAELPGGPQWVGINTARPNALVAEAFRENKLAPLIGYETLRPEVAYGKASRVDFLASGGGRPPCHVEVKNCHLMRHAGLAEFPDCKAARSARHMEELAGVVTAGGRAMLIVVIQMRAGAFDVARDIDPVFDRALRMALEVGVEAYAYTCAVGPEGVAIDTPVPILTPGATVQPARTSG</sequence>
<accession>B7L065</accession>
<feature type="chain" id="PRO_1000196975" description="Sugar fermentation stimulation protein homolog">
    <location>
        <begin position="1"/>
        <end position="248"/>
    </location>
</feature>
<evidence type="ECO:0000255" key="1">
    <source>
        <dbReference type="HAMAP-Rule" id="MF_00095"/>
    </source>
</evidence>
<dbReference type="EMBL" id="CP001298">
    <property type="protein sequence ID" value="ACK81343.1"/>
    <property type="molecule type" value="Genomic_DNA"/>
</dbReference>
<dbReference type="RefSeq" id="WP_012605526.1">
    <property type="nucleotide sequence ID" value="NC_011757.1"/>
</dbReference>
<dbReference type="SMR" id="B7L065"/>
<dbReference type="KEGG" id="mch:Mchl_0407"/>
<dbReference type="HOGENOM" id="CLU_052299_2_0_5"/>
<dbReference type="Proteomes" id="UP000002385">
    <property type="component" value="Chromosome"/>
</dbReference>
<dbReference type="GO" id="GO:0003677">
    <property type="term" value="F:DNA binding"/>
    <property type="evidence" value="ECO:0007669"/>
    <property type="project" value="InterPro"/>
</dbReference>
<dbReference type="CDD" id="cd22359">
    <property type="entry name" value="SfsA-like_bacterial"/>
    <property type="match status" value="1"/>
</dbReference>
<dbReference type="Gene3D" id="2.40.50.580">
    <property type="match status" value="1"/>
</dbReference>
<dbReference type="Gene3D" id="3.40.1350.60">
    <property type="match status" value="1"/>
</dbReference>
<dbReference type="HAMAP" id="MF_00095">
    <property type="entry name" value="SfsA"/>
    <property type="match status" value="1"/>
</dbReference>
<dbReference type="InterPro" id="IPR005224">
    <property type="entry name" value="SfsA"/>
</dbReference>
<dbReference type="InterPro" id="IPR040452">
    <property type="entry name" value="SfsA_C"/>
</dbReference>
<dbReference type="InterPro" id="IPR041465">
    <property type="entry name" value="SfsA_N"/>
</dbReference>
<dbReference type="NCBIfam" id="TIGR00230">
    <property type="entry name" value="sfsA"/>
    <property type="match status" value="1"/>
</dbReference>
<dbReference type="PANTHER" id="PTHR30545">
    <property type="entry name" value="SUGAR FERMENTATION STIMULATION PROTEIN A"/>
    <property type="match status" value="1"/>
</dbReference>
<dbReference type="PANTHER" id="PTHR30545:SF2">
    <property type="entry name" value="SUGAR FERMENTATION STIMULATION PROTEIN A"/>
    <property type="match status" value="1"/>
</dbReference>
<dbReference type="Pfam" id="PF03749">
    <property type="entry name" value="SfsA"/>
    <property type="match status" value="1"/>
</dbReference>
<dbReference type="Pfam" id="PF17746">
    <property type="entry name" value="SfsA_N"/>
    <property type="match status" value="1"/>
</dbReference>
<name>SFSA_METC4</name>
<gene>
    <name evidence="1" type="primary">sfsA</name>
    <name type="ordered locus">Mchl_0407</name>
</gene>
<organism>
    <name type="scientific">Methylorubrum extorquens (strain CM4 / NCIMB 13688)</name>
    <name type="common">Methylobacterium extorquens</name>
    <dbReference type="NCBI Taxonomy" id="440085"/>
    <lineage>
        <taxon>Bacteria</taxon>
        <taxon>Pseudomonadati</taxon>
        <taxon>Pseudomonadota</taxon>
        <taxon>Alphaproteobacteria</taxon>
        <taxon>Hyphomicrobiales</taxon>
        <taxon>Methylobacteriaceae</taxon>
        <taxon>Methylorubrum</taxon>
    </lineage>
</organism>
<protein>
    <recommendedName>
        <fullName evidence="1">Sugar fermentation stimulation protein homolog</fullName>
    </recommendedName>
</protein>
<proteinExistence type="inferred from homology"/>